<feature type="chain" id="PRO_1000079925" description="Glutamate-1-semialdehyde 2,1-aminomutase">
    <location>
        <begin position="1"/>
        <end position="427"/>
    </location>
</feature>
<feature type="modified residue" description="N6-(pyridoxal phosphate)lysine" evidence="1">
    <location>
        <position position="265"/>
    </location>
</feature>
<reference key="1">
    <citation type="submission" date="2007-06" db="EMBL/GenBank/DDBJ databases">
        <title>Complete sequence of Marinomonas sp. MWYL1.</title>
        <authorList>
            <consortium name="US DOE Joint Genome Institute"/>
            <person name="Copeland A."/>
            <person name="Lucas S."/>
            <person name="Lapidus A."/>
            <person name="Barry K."/>
            <person name="Glavina del Rio T."/>
            <person name="Dalin E."/>
            <person name="Tice H."/>
            <person name="Pitluck S."/>
            <person name="Kiss H."/>
            <person name="Brettin T."/>
            <person name="Bruce D."/>
            <person name="Detter J.C."/>
            <person name="Han C."/>
            <person name="Schmutz J."/>
            <person name="Larimer F."/>
            <person name="Land M."/>
            <person name="Hauser L."/>
            <person name="Kyrpides N."/>
            <person name="Kim E."/>
            <person name="Johnston A.W.B."/>
            <person name="Todd J.D."/>
            <person name="Rogers R."/>
            <person name="Wexler M."/>
            <person name="Bond P.L."/>
            <person name="Li Y."/>
            <person name="Richardson P."/>
        </authorList>
    </citation>
    <scope>NUCLEOTIDE SEQUENCE [LARGE SCALE GENOMIC DNA]</scope>
    <source>
        <strain>MWYL1</strain>
    </source>
</reference>
<evidence type="ECO:0000255" key="1">
    <source>
        <dbReference type="HAMAP-Rule" id="MF_00375"/>
    </source>
</evidence>
<organism>
    <name type="scientific">Marinomonas sp. (strain MWYL1)</name>
    <dbReference type="NCBI Taxonomy" id="400668"/>
    <lineage>
        <taxon>Bacteria</taxon>
        <taxon>Pseudomonadati</taxon>
        <taxon>Pseudomonadota</taxon>
        <taxon>Gammaproteobacteria</taxon>
        <taxon>Oceanospirillales</taxon>
        <taxon>Oceanospirillaceae</taxon>
        <taxon>Marinomonas</taxon>
    </lineage>
</organism>
<name>GSA_MARMS</name>
<accession>A6VUX8</accession>
<keyword id="KW-0963">Cytoplasm</keyword>
<keyword id="KW-0413">Isomerase</keyword>
<keyword id="KW-0627">Porphyrin biosynthesis</keyword>
<keyword id="KW-0663">Pyridoxal phosphate</keyword>
<protein>
    <recommendedName>
        <fullName evidence="1">Glutamate-1-semialdehyde 2,1-aminomutase</fullName>
        <shortName evidence="1">GSA</shortName>
        <ecNumber evidence="1">5.4.3.8</ecNumber>
    </recommendedName>
    <alternativeName>
        <fullName evidence="1">Glutamate-1-semialdehyde aminotransferase</fullName>
        <shortName evidence="1">GSA-AT</shortName>
    </alternativeName>
</protein>
<comment type="catalytic activity">
    <reaction evidence="1">
        <text>(S)-4-amino-5-oxopentanoate = 5-aminolevulinate</text>
        <dbReference type="Rhea" id="RHEA:14265"/>
        <dbReference type="ChEBI" id="CHEBI:57501"/>
        <dbReference type="ChEBI" id="CHEBI:356416"/>
        <dbReference type="EC" id="5.4.3.8"/>
    </reaction>
</comment>
<comment type="cofactor">
    <cofactor evidence="1">
        <name>pyridoxal 5'-phosphate</name>
        <dbReference type="ChEBI" id="CHEBI:597326"/>
    </cofactor>
</comment>
<comment type="pathway">
    <text evidence="1">Porphyrin-containing compound metabolism; protoporphyrin-IX biosynthesis; 5-aminolevulinate from L-glutamyl-tRNA(Glu): step 2/2.</text>
</comment>
<comment type="subunit">
    <text evidence="1">Homodimer.</text>
</comment>
<comment type="subcellular location">
    <subcellularLocation>
        <location evidence="1">Cytoplasm</location>
    </subcellularLocation>
</comment>
<comment type="similarity">
    <text evidence="1">Belongs to the class-III pyridoxal-phosphate-dependent aminotransferase family. HemL subfamily.</text>
</comment>
<dbReference type="EC" id="5.4.3.8" evidence="1"/>
<dbReference type="EMBL" id="CP000749">
    <property type="protein sequence ID" value="ABR70257.1"/>
    <property type="molecule type" value="Genomic_DNA"/>
</dbReference>
<dbReference type="SMR" id="A6VUX8"/>
<dbReference type="STRING" id="400668.Mmwyl1_1328"/>
<dbReference type="KEGG" id="mmw:Mmwyl1_1328"/>
<dbReference type="eggNOG" id="COG0001">
    <property type="taxonomic scope" value="Bacteria"/>
</dbReference>
<dbReference type="HOGENOM" id="CLU_016922_1_5_6"/>
<dbReference type="OrthoDB" id="9801052at2"/>
<dbReference type="UniPathway" id="UPA00251">
    <property type="reaction ID" value="UER00317"/>
</dbReference>
<dbReference type="GO" id="GO:0005737">
    <property type="term" value="C:cytoplasm"/>
    <property type="evidence" value="ECO:0007669"/>
    <property type="project" value="UniProtKB-SubCell"/>
</dbReference>
<dbReference type="GO" id="GO:0042286">
    <property type="term" value="F:glutamate-1-semialdehyde 2,1-aminomutase activity"/>
    <property type="evidence" value="ECO:0007669"/>
    <property type="project" value="UniProtKB-UniRule"/>
</dbReference>
<dbReference type="GO" id="GO:0030170">
    <property type="term" value="F:pyridoxal phosphate binding"/>
    <property type="evidence" value="ECO:0007669"/>
    <property type="project" value="InterPro"/>
</dbReference>
<dbReference type="GO" id="GO:0008483">
    <property type="term" value="F:transaminase activity"/>
    <property type="evidence" value="ECO:0007669"/>
    <property type="project" value="InterPro"/>
</dbReference>
<dbReference type="GO" id="GO:0006782">
    <property type="term" value="P:protoporphyrinogen IX biosynthetic process"/>
    <property type="evidence" value="ECO:0007669"/>
    <property type="project" value="UniProtKB-UniRule"/>
</dbReference>
<dbReference type="CDD" id="cd00610">
    <property type="entry name" value="OAT_like"/>
    <property type="match status" value="1"/>
</dbReference>
<dbReference type="FunFam" id="3.40.640.10:FF:000021">
    <property type="entry name" value="Glutamate-1-semialdehyde 2,1-aminomutase"/>
    <property type="match status" value="1"/>
</dbReference>
<dbReference type="Gene3D" id="3.90.1150.10">
    <property type="entry name" value="Aspartate Aminotransferase, domain 1"/>
    <property type="match status" value="1"/>
</dbReference>
<dbReference type="Gene3D" id="3.40.640.10">
    <property type="entry name" value="Type I PLP-dependent aspartate aminotransferase-like (Major domain)"/>
    <property type="match status" value="1"/>
</dbReference>
<dbReference type="HAMAP" id="MF_00375">
    <property type="entry name" value="HemL_aminotrans_3"/>
    <property type="match status" value="1"/>
</dbReference>
<dbReference type="InterPro" id="IPR004639">
    <property type="entry name" value="4pyrrol_synth_GluAld_NH2Trfase"/>
</dbReference>
<dbReference type="InterPro" id="IPR005814">
    <property type="entry name" value="Aminotrans_3"/>
</dbReference>
<dbReference type="InterPro" id="IPR049704">
    <property type="entry name" value="Aminotrans_3_PPA_site"/>
</dbReference>
<dbReference type="InterPro" id="IPR015424">
    <property type="entry name" value="PyrdxlP-dep_Trfase"/>
</dbReference>
<dbReference type="InterPro" id="IPR015421">
    <property type="entry name" value="PyrdxlP-dep_Trfase_major"/>
</dbReference>
<dbReference type="InterPro" id="IPR015422">
    <property type="entry name" value="PyrdxlP-dep_Trfase_small"/>
</dbReference>
<dbReference type="NCBIfam" id="TIGR00713">
    <property type="entry name" value="hemL"/>
    <property type="match status" value="1"/>
</dbReference>
<dbReference type="NCBIfam" id="NF000818">
    <property type="entry name" value="PRK00062.1"/>
    <property type="match status" value="1"/>
</dbReference>
<dbReference type="PANTHER" id="PTHR43713">
    <property type="entry name" value="GLUTAMATE-1-SEMIALDEHYDE 2,1-AMINOMUTASE"/>
    <property type="match status" value="1"/>
</dbReference>
<dbReference type="PANTHER" id="PTHR43713:SF3">
    <property type="entry name" value="GLUTAMATE-1-SEMIALDEHYDE 2,1-AMINOMUTASE 1, CHLOROPLASTIC-RELATED"/>
    <property type="match status" value="1"/>
</dbReference>
<dbReference type="Pfam" id="PF00202">
    <property type="entry name" value="Aminotran_3"/>
    <property type="match status" value="1"/>
</dbReference>
<dbReference type="SUPFAM" id="SSF53383">
    <property type="entry name" value="PLP-dependent transferases"/>
    <property type="match status" value="1"/>
</dbReference>
<dbReference type="PROSITE" id="PS00600">
    <property type="entry name" value="AA_TRANSFER_CLASS_3"/>
    <property type="match status" value="1"/>
</dbReference>
<proteinExistence type="inferred from homology"/>
<gene>
    <name evidence="1" type="primary">hemL</name>
    <name type="ordered locus">Mmwyl1_1328</name>
</gene>
<sequence length="427" mass="45875">MSRSEDLYARAQHRIPGGVNSPVRAFNGVGGTPIFFQRGEGAYVYDEDKKRYIDYVGSWGPMILGHSHPDVLDAVRQQLDFGLSFGAPTEVEITMAEKVCELVPSMDMVRMVNSGTEATMSAIRLARGYTGRDKIVKFEGCYHGHSDSLLVKAGSGALTLGVPNSPGVPADLAQHTITLQYNDIEEVKRCFSEIGDQIACIIVEPVAGNMNCILPVEGFLETLRKVCDESGAVLIFDEVMTGFRVALGGAQAHFGIVPDLTTLGKVIGAGMPVGAFGGKREIMEHISPLGPVYQAGTLSGNPVAMVAGLAVLNKISEEGFHQTLGTKADRLVSGLKQAADEAGVPFCVVSVGGMFGFFFTEAEVVATFADVQKCDLSKFKAFFHYMLEEGVYFAPAAFEAGFISQAHTEEDIDYTIEAAKRSFAKLV</sequence>